<evidence type="ECO:0000255" key="1">
    <source>
        <dbReference type="HAMAP-Rule" id="MF_01416"/>
    </source>
</evidence>
<proteinExistence type="inferred from homology"/>
<accession>B0SDA2</accession>
<protein>
    <recommendedName>
        <fullName evidence="1">ATP synthase subunit delta</fullName>
    </recommendedName>
    <alternativeName>
        <fullName evidence="1">ATP synthase F(1) sector subunit delta</fullName>
    </alternativeName>
    <alternativeName>
        <fullName evidence="1">F-type ATPase subunit delta</fullName>
        <shortName evidence="1">F-ATPase subunit delta</shortName>
    </alternativeName>
</protein>
<reference key="1">
    <citation type="journal article" date="2008" name="PLoS ONE">
        <title>Genome sequence of the saprophyte Leptospira biflexa provides insights into the evolution of Leptospira and the pathogenesis of leptospirosis.</title>
        <authorList>
            <person name="Picardeau M."/>
            <person name="Bulach D.M."/>
            <person name="Bouchier C."/>
            <person name="Zuerner R.L."/>
            <person name="Zidane N."/>
            <person name="Wilson P.J."/>
            <person name="Creno S."/>
            <person name="Kuczek E.S."/>
            <person name="Bommezzadri S."/>
            <person name="Davis J.C."/>
            <person name="McGrath A."/>
            <person name="Johnson M.J."/>
            <person name="Boursaux-Eude C."/>
            <person name="Seemann T."/>
            <person name="Rouy Z."/>
            <person name="Coppel R.L."/>
            <person name="Rood J.I."/>
            <person name="Lajus A."/>
            <person name="Davies J.K."/>
            <person name="Medigue C."/>
            <person name="Adler B."/>
        </authorList>
    </citation>
    <scope>NUCLEOTIDE SEQUENCE [LARGE SCALE GENOMIC DNA]</scope>
    <source>
        <strain>Patoc 1 / Ames</strain>
    </source>
</reference>
<dbReference type="EMBL" id="CP000777">
    <property type="protein sequence ID" value="ABZ93307.1"/>
    <property type="molecule type" value="Genomic_DNA"/>
</dbReference>
<dbReference type="RefSeq" id="WP_012387817.1">
    <property type="nucleotide sequence ID" value="NC_010842.1"/>
</dbReference>
<dbReference type="SMR" id="B0SDA2"/>
<dbReference type="KEGG" id="lbf:LBF_0775"/>
<dbReference type="HOGENOM" id="CLU_085114_4_0_12"/>
<dbReference type="GO" id="GO:0005886">
    <property type="term" value="C:plasma membrane"/>
    <property type="evidence" value="ECO:0007669"/>
    <property type="project" value="UniProtKB-SubCell"/>
</dbReference>
<dbReference type="GO" id="GO:0045259">
    <property type="term" value="C:proton-transporting ATP synthase complex"/>
    <property type="evidence" value="ECO:0007669"/>
    <property type="project" value="UniProtKB-KW"/>
</dbReference>
<dbReference type="GO" id="GO:0046933">
    <property type="term" value="F:proton-transporting ATP synthase activity, rotational mechanism"/>
    <property type="evidence" value="ECO:0007669"/>
    <property type="project" value="UniProtKB-UniRule"/>
</dbReference>
<dbReference type="Gene3D" id="1.10.520.20">
    <property type="entry name" value="N-terminal domain of the delta subunit of the F1F0-ATP synthase"/>
    <property type="match status" value="1"/>
</dbReference>
<dbReference type="HAMAP" id="MF_01416">
    <property type="entry name" value="ATP_synth_delta_bact"/>
    <property type="match status" value="1"/>
</dbReference>
<dbReference type="InterPro" id="IPR026015">
    <property type="entry name" value="ATP_synth_OSCP/delta_N_sf"/>
</dbReference>
<dbReference type="InterPro" id="IPR000711">
    <property type="entry name" value="ATPase_OSCP/dsu"/>
</dbReference>
<dbReference type="NCBIfam" id="TIGR01145">
    <property type="entry name" value="ATP_synt_delta"/>
    <property type="match status" value="1"/>
</dbReference>
<dbReference type="NCBIfam" id="NF009969">
    <property type="entry name" value="PRK13434.1"/>
    <property type="match status" value="1"/>
</dbReference>
<dbReference type="PANTHER" id="PTHR11910">
    <property type="entry name" value="ATP SYNTHASE DELTA CHAIN"/>
    <property type="match status" value="1"/>
</dbReference>
<dbReference type="Pfam" id="PF00213">
    <property type="entry name" value="OSCP"/>
    <property type="match status" value="1"/>
</dbReference>
<dbReference type="PRINTS" id="PR00125">
    <property type="entry name" value="ATPASEDELTA"/>
</dbReference>
<dbReference type="SUPFAM" id="SSF47928">
    <property type="entry name" value="N-terminal domain of the delta subunit of the F1F0-ATP synthase"/>
    <property type="match status" value="1"/>
</dbReference>
<organism>
    <name type="scientific">Leptospira biflexa serovar Patoc (strain Patoc 1 / Ames)</name>
    <dbReference type="NCBI Taxonomy" id="355278"/>
    <lineage>
        <taxon>Bacteria</taxon>
        <taxon>Pseudomonadati</taxon>
        <taxon>Spirochaetota</taxon>
        <taxon>Spirochaetia</taxon>
        <taxon>Leptospirales</taxon>
        <taxon>Leptospiraceae</taxon>
        <taxon>Leptospira</taxon>
    </lineage>
</organism>
<feature type="chain" id="PRO_1000184739" description="ATP synthase subunit delta">
    <location>
        <begin position="1"/>
        <end position="187"/>
    </location>
</feature>
<gene>
    <name evidence="1" type="primary">atpH</name>
    <name type="ordered locus">LBF_0775</name>
</gene>
<comment type="function">
    <text evidence="1">F(1)F(0) ATP synthase produces ATP from ADP in the presence of a proton or sodium gradient. F-type ATPases consist of two structural domains, F(1) containing the extramembraneous catalytic core and F(0) containing the membrane proton channel, linked together by a central stalk and a peripheral stalk. During catalysis, ATP synthesis in the catalytic domain of F(1) is coupled via a rotary mechanism of the central stalk subunits to proton translocation.</text>
</comment>
<comment type="function">
    <text evidence="1">This protein is part of the stalk that links CF(0) to CF(1). It either transmits conformational changes from CF(0) to CF(1) or is implicated in proton conduction.</text>
</comment>
<comment type="subunit">
    <text evidence="1">F-type ATPases have 2 components, F(1) - the catalytic core - and F(0) - the membrane proton channel. F(1) has five subunits: alpha(3), beta(3), gamma(1), delta(1), epsilon(1). F(0) has three main subunits: a(1), b(2) and c(10-14). The alpha and beta chains form an alternating ring which encloses part of the gamma chain. F(1) is attached to F(0) by a central stalk formed by the gamma and epsilon chains, while a peripheral stalk is formed by the delta and b chains.</text>
</comment>
<comment type="subcellular location">
    <subcellularLocation>
        <location evidence="1">Cell inner membrane</location>
        <topology evidence="1">Peripheral membrane protein</topology>
    </subcellularLocation>
</comment>
<comment type="similarity">
    <text evidence="1">Belongs to the ATPase delta chain family.</text>
</comment>
<sequence length="187" mass="20889">MSLNQISKVYATALLELAQEANSLESTEEELSSLVGVFFSDDTIRHYFLSPLVDPSEKEQTAAKSVQGKASEIVANFITLVVRKNRFLYLKDILEDYRSGVDRLKNRSSLRIVSKDSLGKEAVDQITKSISSKFGREVRVTEHTDLNLIGGFKIYIDDFLIDASIRAKLAGTREALLQKKIPVGAFE</sequence>
<name>ATPD_LEPBA</name>
<keyword id="KW-0066">ATP synthesis</keyword>
<keyword id="KW-0997">Cell inner membrane</keyword>
<keyword id="KW-1003">Cell membrane</keyword>
<keyword id="KW-0139">CF(1)</keyword>
<keyword id="KW-0375">Hydrogen ion transport</keyword>
<keyword id="KW-0406">Ion transport</keyword>
<keyword id="KW-0472">Membrane</keyword>
<keyword id="KW-0813">Transport</keyword>